<accession>A8A6H0</accession>
<gene>
    <name evidence="1" type="primary">tnaA</name>
    <name type="ordered locus">EcHS_A3922</name>
</gene>
<dbReference type="EC" id="4.1.99.1" evidence="1"/>
<dbReference type="EMBL" id="CP000802">
    <property type="protein sequence ID" value="ABV08124.1"/>
    <property type="molecule type" value="Genomic_DNA"/>
</dbReference>
<dbReference type="RefSeq" id="WP_012136436.1">
    <property type="nucleotide sequence ID" value="NC_009800.1"/>
</dbReference>
<dbReference type="SMR" id="A8A6H0"/>
<dbReference type="KEGG" id="ecx:EcHS_A3922"/>
<dbReference type="HOGENOM" id="CLU_047223_0_0_6"/>
<dbReference type="UniPathway" id="UPA00332">
    <property type="reaction ID" value="UER00452"/>
</dbReference>
<dbReference type="GO" id="GO:0009034">
    <property type="term" value="F:tryptophanase activity"/>
    <property type="evidence" value="ECO:0007669"/>
    <property type="project" value="UniProtKB-UniRule"/>
</dbReference>
<dbReference type="FunFam" id="3.40.640.10:FF:000039">
    <property type="entry name" value="Tryptophanase"/>
    <property type="match status" value="1"/>
</dbReference>
<dbReference type="Gene3D" id="3.90.1150.10">
    <property type="entry name" value="Aspartate Aminotransferase, domain 1"/>
    <property type="match status" value="1"/>
</dbReference>
<dbReference type="Gene3D" id="3.40.640.10">
    <property type="entry name" value="Type I PLP-dependent aspartate aminotransferase-like (Major domain)"/>
    <property type="match status" value="1"/>
</dbReference>
<dbReference type="HAMAP" id="MF_00544">
    <property type="entry name" value="Tryptophanase"/>
    <property type="match status" value="1"/>
</dbReference>
<dbReference type="InterPro" id="IPR001597">
    <property type="entry name" value="ArAA_b-elim_lyase/Thr_aldolase"/>
</dbReference>
<dbReference type="InterPro" id="IPR011166">
    <property type="entry name" value="Beta-eliminating_lyase"/>
</dbReference>
<dbReference type="InterPro" id="IPR015424">
    <property type="entry name" value="PyrdxlP-dep_Trfase"/>
</dbReference>
<dbReference type="InterPro" id="IPR015421">
    <property type="entry name" value="PyrdxlP-dep_Trfase_major"/>
</dbReference>
<dbReference type="InterPro" id="IPR015422">
    <property type="entry name" value="PyrdxlP-dep_Trfase_small"/>
</dbReference>
<dbReference type="InterPro" id="IPR013440">
    <property type="entry name" value="TNase"/>
</dbReference>
<dbReference type="InterPro" id="IPR018176">
    <property type="entry name" value="Tryptophanase_CS"/>
</dbReference>
<dbReference type="NCBIfam" id="NF009709">
    <property type="entry name" value="PRK13238.1"/>
    <property type="match status" value="1"/>
</dbReference>
<dbReference type="NCBIfam" id="TIGR02617">
    <property type="entry name" value="tnaA_trp_ase"/>
    <property type="match status" value="1"/>
</dbReference>
<dbReference type="PANTHER" id="PTHR32325">
    <property type="entry name" value="BETA-ELIMINATING LYASE-LIKE PROTEIN-RELATED"/>
    <property type="match status" value="1"/>
</dbReference>
<dbReference type="PANTHER" id="PTHR32325:SF4">
    <property type="entry name" value="TRYPTOPHANASE"/>
    <property type="match status" value="1"/>
</dbReference>
<dbReference type="Pfam" id="PF01212">
    <property type="entry name" value="Beta_elim_lyase"/>
    <property type="match status" value="1"/>
</dbReference>
<dbReference type="PIRSF" id="PIRSF001386">
    <property type="entry name" value="Trpase"/>
    <property type="match status" value="1"/>
</dbReference>
<dbReference type="SUPFAM" id="SSF53383">
    <property type="entry name" value="PLP-dependent transferases"/>
    <property type="match status" value="1"/>
</dbReference>
<dbReference type="PROSITE" id="PS00853">
    <property type="entry name" value="BETA_ELIM_LYASE"/>
    <property type="match status" value="1"/>
</dbReference>
<comment type="catalytic activity">
    <reaction evidence="1">
        <text>L-tryptophan + H2O = indole + pyruvate + NH4(+)</text>
        <dbReference type="Rhea" id="RHEA:19553"/>
        <dbReference type="ChEBI" id="CHEBI:15361"/>
        <dbReference type="ChEBI" id="CHEBI:15377"/>
        <dbReference type="ChEBI" id="CHEBI:16881"/>
        <dbReference type="ChEBI" id="CHEBI:28938"/>
        <dbReference type="ChEBI" id="CHEBI:57912"/>
        <dbReference type="EC" id="4.1.99.1"/>
    </reaction>
</comment>
<comment type="cofactor">
    <cofactor evidence="1">
        <name>pyridoxal 5'-phosphate</name>
        <dbReference type="ChEBI" id="CHEBI:597326"/>
    </cofactor>
</comment>
<comment type="pathway">
    <text evidence="1">Amino-acid degradation; L-tryptophan degradation via pyruvate pathway; indole and pyruvate from L-tryptophan: step 1/1.</text>
</comment>
<comment type="subunit">
    <text evidence="1">Homotetramer.</text>
</comment>
<comment type="similarity">
    <text evidence="1">Belongs to the beta-eliminating lyase family.</text>
</comment>
<name>TNAA_ECOHS</name>
<protein>
    <recommendedName>
        <fullName evidence="1">Tryptophanase</fullName>
        <ecNumber evidence="1">4.1.99.1</ecNumber>
    </recommendedName>
    <alternativeName>
        <fullName evidence="1">L-tryptophan indole-lyase</fullName>
        <shortName evidence="1">TNase</shortName>
    </alternativeName>
</protein>
<reference key="1">
    <citation type="journal article" date="2008" name="J. Bacteriol.">
        <title>The pangenome structure of Escherichia coli: comparative genomic analysis of E. coli commensal and pathogenic isolates.</title>
        <authorList>
            <person name="Rasko D.A."/>
            <person name="Rosovitz M.J."/>
            <person name="Myers G.S.A."/>
            <person name="Mongodin E.F."/>
            <person name="Fricke W.F."/>
            <person name="Gajer P."/>
            <person name="Crabtree J."/>
            <person name="Sebaihia M."/>
            <person name="Thomson N.R."/>
            <person name="Chaudhuri R."/>
            <person name="Henderson I.R."/>
            <person name="Sperandio V."/>
            <person name="Ravel J."/>
        </authorList>
    </citation>
    <scope>NUCLEOTIDE SEQUENCE [LARGE SCALE GENOMIC DNA]</scope>
    <source>
        <strain>HS</strain>
    </source>
</reference>
<evidence type="ECO:0000255" key="1">
    <source>
        <dbReference type="HAMAP-Rule" id="MF_00544"/>
    </source>
</evidence>
<proteinExistence type="inferred from homology"/>
<sequence>MENFKHLPEPFRIRVIEPVKRTTRAYREEAIIKSGMNPFLLDSEDVFIDLLTDSGTGAVTQSMQAAMMRGDEAYSGSRSYYALAESVKNIFGYQYTIPTHQGRGAEQIYIPVLIKKREQEKGLDRSKMVAFSNYFFDTTQGHSQINGCTVRNVYIKEAFDTGVRYDFKGNFDLEGLERGIEEVGPNNVPYIVATITSNSAGGQPVSLANLKAMYSIAKKYDIPVVMDSARFAENAYFIKQREAEYKDWTIEQITRETYKYADMLAMSAKKDAMVPMGGLLCMKDDSFFDVYTECRTLCVVQEGFPTYGGLEGGAMERLAVGLYDGMNLDWLAYRIAQVQYLVDGLEEIDVVCQQAGGHAAFVDAGKLLPHIPADQFPAQALACELYKVAGIRAVEIGSFLLGRDPKTGKQLPCPAELLRLTIPRATYTQTHMDFIIEAFKHVKENAANIKGLTFTYEPKVLRHFTAKLKEV</sequence>
<organism>
    <name type="scientific">Escherichia coli O9:H4 (strain HS)</name>
    <dbReference type="NCBI Taxonomy" id="331112"/>
    <lineage>
        <taxon>Bacteria</taxon>
        <taxon>Pseudomonadati</taxon>
        <taxon>Pseudomonadota</taxon>
        <taxon>Gammaproteobacteria</taxon>
        <taxon>Enterobacterales</taxon>
        <taxon>Enterobacteriaceae</taxon>
        <taxon>Escherichia</taxon>
    </lineage>
</organism>
<feature type="chain" id="PRO_1000061073" description="Tryptophanase">
    <location>
        <begin position="1"/>
        <end position="471"/>
    </location>
</feature>
<feature type="modified residue" description="N6-acetyllysine" evidence="1">
    <location>
        <position position="5"/>
    </location>
</feature>
<feature type="modified residue" description="N6-acetyllysine" evidence="1">
    <location>
        <position position="115"/>
    </location>
</feature>
<feature type="modified residue" description="N6-acetyllysine" evidence="1">
    <location>
        <position position="156"/>
    </location>
</feature>
<feature type="modified residue" description="N6-(pyridoxal phosphate)lysine" evidence="1">
    <location>
        <position position="270"/>
    </location>
</feature>
<feature type="modified residue" description="N6-acetyllysine" evidence="1">
    <location>
        <position position="450"/>
    </location>
</feature>
<keyword id="KW-0007">Acetylation</keyword>
<keyword id="KW-0456">Lyase</keyword>
<keyword id="KW-0663">Pyridoxal phosphate</keyword>
<keyword id="KW-0823">Tryptophan catabolism</keyword>